<sequence>MNIRPLHDRVIVKRKEVETKSAGGIVLTGSAAAKSTRGEVLAVGNGRILENGEVKPLDVKVGDIVIFNDGYGVKSEKIDNEEVLIMSESDILAIVEA</sequence>
<proteinExistence type="inferred from homology"/>
<name>CH10_SHIB3</name>
<dbReference type="EMBL" id="CP001063">
    <property type="protein sequence ID" value="ACD09019.1"/>
    <property type="molecule type" value="Genomic_DNA"/>
</dbReference>
<dbReference type="RefSeq" id="WP_001026276.1">
    <property type="nucleotide sequence ID" value="NC_010658.1"/>
</dbReference>
<dbReference type="SMR" id="B2TY17"/>
<dbReference type="STRING" id="344609.SbBS512_E4671"/>
<dbReference type="KEGG" id="sbc:SbBS512_E4671"/>
<dbReference type="HOGENOM" id="CLU_132825_1_1_6"/>
<dbReference type="Proteomes" id="UP000001030">
    <property type="component" value="Chromosome"/>
</dbReference>
<dbReference type="GO" id="GO:0005737">
    <property type="term" value="C:cytoplasm"/>
    <property type="evidence" value="ECO:0007669"/>
    <property type="project" value="UniProtKB-SubCell"/>
</dbReference>
<dbReference type="GO" id="GO:0005524">
    <property type="term" value="F:ATP binding"/>
    <property type="evidence" value="ECO:0007669"/>
    <property type="project" value="InterPro"/>
</dbReference>
<dbReference type="GO" id="GO:0046872">
    <property type="term" value="F:metal ion binding"/>
    <property type="evidence" value="ECO:0007669"/>
    <property type="project" value="TreeGrafter"/>
</dbReference>
<dbReference type="GO" id="GO:0044183">
    <property type="term" value="F:protein folding chaperone"/>
    <property type="evidence" value="ECO:0007669"/>
    <property type="project" value="InterPro"/>
</dbReference>
<dbReference type="GO" id="GO:0051087">
    <property type="term" value="F:protein-folding chaperone binding"/>
    <property type="evidence" value="ECO:0007669"/>
    <property type="project" value="TreeGrafter"/>
</dbReference>
<dbReference type="GO" id="GO:0051082">
    <property type="term" value="F:unfolded protein binding"/>
    <property type="evidence" value="ECO:0007669"/>
    <property type="project" value="TreeGrafter"/>
</dbReference>
<dbReference type="GO" id="GO:0051085">
    <property type="term" value="P:chaperone cofactor-dependent protein refolding"/>
    <property type="evidence" value="ECO:0007669"/>
    <property type="project" value="TreeGrafter"/>
</dbReference>
<dbReference type="CDD" id="cd00320">
    <property type="entry name" value="cpn10"/>
    <property type="match status" value="1"/>
</dbReference>
<dbReference type="FunFam" id="2.30.33.40:FF:000001">
    <property type="entry name" value="10 kDa chaperonin"/>
    <property type="match status" value="1"/>
</dbReference>
<dbReference type="Gene3D" id="2.30.33.40">
    <property type="entry name" value="GroES chaperonin"/>
    <property type="match status" value="1"/>
</dbReference>
<dbReference type="HAMAP" id="MF_00580">
    <property type="entry name" value="CH10"/>
    <property type="match status" value="1"/>
</dbReference>
<dbReference type="InterPro" id="IPR020818">
    <property type="entry name" value="Chaperonin_GroES"/>
</dbReference>
<dbReference type="InterPro" id="IPR037124">
    <property type="entry name" value="Chaperonin_GroES_sf"/>
</dbReference>
<dbReference type="InterPro" id="IPR018369">
    <property type="entry name" value="Chaprnonin_Cpn10_CS"/>
</dbReference>
<dbReference type="InterPro" id="IPR011032">
    <property type="entry name" value="GroES-like_sf"/>
</dbReference>
<dbReference type="NCBIfam" id="NF001526">
    <property type="entry name" value="PRK00364.1-1"/>
    <property type="match status" value="1"/>
</dbReference>
<dbReference type="NCBIfam" id="NF001527">
    <property type="entry name" value="PRK00364.1-2"/>
    <property type="match status" value="1"/>
</dbReference>
<dbReference type="NCBIfam" id="NF001531">
    <property type="entry name" value="PRK00364.2-2"/>
    <property type="match status" value="1"/>
</dbReference>
<dbReference type="PANTHER" id="PTHR10772">
    <property type="entry name" value="10 KDA HEAT SHOCK PROTEIN"/>
    <property type="match status" value="1"/>
</dbReference>
<dbReference type="PANTHER" id="PTHR10772:SF58">
    <property type="entry name" value="CO-CHAPERONIN GROES"/>
    <property type="match status" value="1"/>
</dbReference>
<dbReference type="Pfam" id="PF00166">
    <property type="entry name" value="Cpn10"/>
    <property type="match status" value="1"/>
</dbReference>
<dbReference type="PRINTS" id="PR00297">
    <property type="entry name" value="CHAPERONIN10"/>
</dbReference>
<dbReference type="SMART" id="SM00883">
    <property type="entry name" value="Cpn10"/>
    <property type="match status" value="1"/>
</dbReference>
<dbReference type="SUPFAM" id="SSF50129">
    <property type="entry name" value="GroES-like"/>
    <property type="match status" value="1"/>
</dbReference>
<dbReference type="PROSITE" id="PS00681">
    <property type="entry name" value="CHAPERONINS_CPN10"/>
    <property type="match status" value="1"/>
</dbReference>
<feature type="chain" id="PRO_1000129707" description="Co-chaperonin GroES">
    <location>
        <begin position="1"/>
        <end position="97"/>
    </location>
</feature>
<comment type="function">
    <text evidence="1">Together with the chaperonin GroEL, plays an essential role in assisting protein folding. The GroEL-GroES system forms a nano-cage that allows encapsulation of the non-native substrate proteins and provides a physical environment optimized to promote and accelerate protein folding. GroES binds to the apical surface of the GroEL ring, thereby capping the opening of the GroEL channel.</text>
</comment>
<comment type="subunit">
    <text evidence="1">Heptamer of 7 subunits arranged in a ring. Interacts with the chaperonin GroEL.</text>
</comment>
<comment type="subcellular location">
    <subcellularLocation>
        <location evidence="1">Cytoplasm</location>
    </subcellularLocation>
</comment>
<comment type="similarity">
    <text evidence="1">Belongs to the GroES chaperonin family.</text>
</comment>
<gene>
    <name evidence="1" type="primary">groES</name>
    <name evidence="1" type="synonym">groS</name>
    <name type="ordered locus">SbBS512_E4671</name>
</gene>
<reference key="1">
    <citation type="submission" date="2008-05" db="EMBL/GenBank/DDBJ databases">
        <title>Complete sequence of Shigella boydii serotype 18 strain BS512.</title>
        <authorList>
            <person name="Rasko D.A."/>
            <person name="Rosovitz M."/>
            <person name="Maurelli A.T."/>
            <person name="Myers G."/>
            <person name="Seshadri R."/>
            <person name="Cer R."/>
            <person name="Jiang L."/>
            <person name="Ravel J."/>
            <person name="Sebastian Y."/>
        </authorList>
    </citation>
    <scope>NUCLEOTIDE SEQUENCE [LARGE SCALE GENOMIC DNA]</scope>
    <source>
        <strain>CDC 3083-94 / BS512</strain>
    </source>
</reference>
<protein>
    <recommendedName>
        <fullName evidence="1">Co-chaperonin GroES</fullName>
    </recommendedName>
    <alternativeName>
        <fullName evidence="1">10 kDa chaperonin</fullName>
    </alternativeName>
    <alternativeName>
        <fullName evidence="1">Chaperonin-10</fullName>
        <shortName evidence="1">Cpn10</shortName>
    </alternativeName>
</protein>
<accession>B2TY17</accession>
<evidence type="ECO:0000255" key="1">
    <source>
        <dbReference type="HAMAP-Rule" id="MF_00580"/>
    </source>
</evidence>
<keyword id="KW-0143">Chaperone</keyword>
<keyword id="KW-0963">Cytoplasm</keyword>
<keyword id="KW-1185">Reference proteome</keyword>
<organism>
    <name type="scientific">Shigella boydii serotype 18 (strain CDC 3083-94 / BS512)</name>
    <dbReference type="NCBI Taxonomy" id="344609"/>
    <lineage>
        <taxon>Bacteria</taxon>
        <taxon>Pseudomonadati</taxon>
        <taxon>Pseudomonadota</taxon>
        <taxon>Gammaproteobacteria</taxon>
        <taxon>Enterobacterales</taxon>
        <taxon>Enterobacteriaceae</taxon>
        <taxon>Shigella</taxon>
    </lineage>
</organism>